<evidence type="ECO:0000255" key="1">
    <source>
        <dbReference type="HAMAP-Rule" id="MF_01320"/>
    </source>
</evidence>
<evidence type="ECO:0000256" key="2">
    <source>
        <dbReference type="SAM" id="MobiDB-lite"/>
    </source>
</evidence>
<evidence type="ECO:0000305" key="3"/>
<gene>
    <name evidence="1" type="primary">rplB</name>
    <name type="ordered locus">Hhal_0855</name>
</gene>
<dbReference type="EMBL" id="CP000544">
    <property type="protein sequence ID" value="ABM61631.1"/>
    <property type="molecule type" value="Genomic_DNA"/>
</dbReference>
<dbReference type="RefSeq" id="WP_011813654.1">
    <property type="nucleotide sequence ID" value="NC_008789.1"/>
</dbReference>
<dbReference type="SMR" id="A1WVB9"/>
<dbReference type="STRING" id="349124.Hhal_0855"/>
<dbReference type="KEGG" id="hha:Hhal_0855"/>
<dbReference type="eggNOG" id="COG0090">
    <property type="taxonomic scope" value="Bacteria"/>
</dbReference>
<dbReference type="HOGENOM" id="CLU_036235_2_1_6"/>
<dbReference type="OrthoDB" id="9778722at2"/>
<dbReference type="Proteomes" id="UP000000647">
    <property type="component" value="Chromosome"/>
</dbReference>
<dbReference type="GO" id="GO:0015934">
    <property type="term" value="C:large ribosomal subunit"/>
    <property type="evidence" value="ECO:0007669"/>
    <property type="project" value="InterPro"/>
</dbReference>
<dbReference type="GO" id="GO:0019843">
    <property type="term" value="F:rRNA binding"/>
    <property type="evidence" value="ECO:0007669"/>
    <property type="project" value="UniProtKB-UniRule"/>
</dbReference>
<dbReference type="GO" id="GO:0003735">
    <property type="term" value="F:structural constituent of ribosome"/>
    <property type="evidence" value="ECO:0007669"/>
    <property type="project" value="InterPro"/>
</dbReference>
<dbReference type="GO" id="GO:0016740">
    <property type="term" value="F:transferase activity"/>
    <property type="evidence" value="ECO:0007669"/>
    <property type="project" value="InterPro"/>
</dbReference>
<dbReference type="GO" id="GO:0002181">
    <property type="term" value="P:cytoplasmic translation"/>
    <property type="evidence" value="ECO:0007669"/>
    <property type="project" value="TreeGrafter"/>
</dbReference>
<dbReference type="FunFam" id="2.30.30.30:FF:000001">
    <property type="entry name" value="50S ribosomal protein L2"/>
    <property type="match status" value="1"/>
</dbReference>
<dbReference type="FunFam" id="2.40.50.140:FF:000003">
    <property type="entry name" value="50S ribosomal protein L2"/>
    <property type="match status" value="1"/>
</dbReference>
<dbReference type="FunFam" id="4.10.950.10:FF:000001">
    <property type="entry name" value="50S ribosomal protein L2"/>
    <property type="match status" value="1"/>
</dbReference>
<dbReference type="Gene3D" id="2.30.30.30">
    <property type="match status" value="1"/>
</dbReference>
<dbReference type="Gene3D" id="2.40.50.140">
    <property type="entry name" value="Nucleic acid-binding proteins"/>
    <property type="match status" value="1"/>
</dbReference>
<dbReference type="Gene3D" id="4.10.950.10">
    <property type="entry name" value="Ribosomal protein L2, domain 3"/>
    <property type="match status" value="1"/>
</dbReference>
<dbReference type="HAMAP" id="MF_01320_B">
    <property type="entry name" value="Ribosomal_uL2_B"/>
    <property type="match status" value="1"/>
</dbReference>
<dbReference type="InterPro" id="IPR012340">
    <property type="entry name" value="NA-bd_OB-fold"/>
</dbReference>
<dbReference type="InterPro" id="IPR014722">
    <property type="entry name" value="Rib_uL2_dom2"/>
</dbReference>
<dbReference type="InterPro" id="IPR002171">
    <property type="entry name" value="Ribosomal_uL2"/>
</dbReference>
<dbReference type="InterPro" id="IPR005880">
    <property type="entry name" value="Ribosomal_uL2_bac/org-type"/>
</dbReference>
<dbReference type="InterPro" id="IPR022669">
    <property type="entry name" value="Ribosomal_uL2_C"/>
</dbReference>
<dbReference type="InterPro" id="IPR022671">
    <property type="entry name" value="Ribosomal_uL2_CS"/>
</dbReference>
<dbReference type="InterPro" id="IPR014726">
    <property type="entry name" value="Ribosomal_uL2_dom3"/>
</dbReference>
<dbReference type="InterPro" id="IPR022666">
    <property type="entry name" value="Ribosomal_uL2_RNA-bd_dom"/>
</dbReference>
<dbReference type="InterPro" id="IPR008991">
    <property type="entry name" value="Translation_prot_SH3-like_sf"/>
</dbReference>
<dbReference type="NCBIfam" id="TIGR01171">
    <property type="entry name" value="rplB_bact"/>
    <property type="match status" value="1"/>
</dbReference>
<dbReference type="PANTHER" id="PTHR13691:SF5">
    <property type="entry name" value="LARGE RIBOSOMAL SUBUNIT PROTEIN UL2M"/>
    <property type="match status" value="1"/>
</dbReference>
<dbReference type="PANTHER" id="PTHR13691">
    <property type="entry name" value="RIBOSOMAL PROTEIN L2"/>
    <property type="match status" value="1"/>
</dbReference>
<dbReference type="Pfam" id="PF00181">
    <property type="entry name" value="Ribosomal_L2"/>
    <property type="match status" value="1"/>
</dbReference>
<dbReference type="Pfam" id="PF03947">
    <property type="entry name" value="Ribosomal_L2_C"/>
    <property type="match status" value="1"/>
</dbReference>
<dbReference type="PIRSF" id="PIRSF002158">
    <property type="entry name" value="Ribosomal_L2"/>
    <property type="match status" value="1"/>
</dbReference>
<dbReference type="SMART" id="SM01383">
    <property type="entry name" value="Ribosomal_L2"/>
    <property type="match status" value="1"/>
</dbReference>
<dbReference type="SMART" id="SM01382">
    <property type="entry name" value="Ribosomal_L2_C"/>
    <property type="match status" value="1"/>
</dbReference>
<dbReference type="SUPFAM" id="SSF50249">
    <property type="entry name" value="Nucleic acid-binding proteins"/>
    <property type="match status" value="1"/>
</dbReference>
<dbReference type="SUPFAM" id="SSF50104">
    <property type="entry name" value="Translation proteins SH3-like domain"/>
    <property type="match status" value="1"/>
</dbReference>
<dbReference type="PROSITE" id="PS00467">
    <property type="entry name" value="RIBOSOMAL_L2"/>
    <property type="match status" value="1"/>
</dbReference>
<reference key="1">
    <citation type="submission" date="2006-12" db="EMBL/GenBank/DDBJ databases">
        <title>Complete sequence of Halorhodospira halophila SL1.</title>
        <authorList>
            <consortium name="US DOE Joint Genome Institute"/>
            <person name="Copeland A."/>
            <person name="Lucas S."/>
            <person name="Lapidus A."/>
            <person name="Barry K."/>
            <person name="Detter J.C."/>
            <person name="Glavina del Rio T."/>
            <person name="Hammon N."/>
            <person name="Israni S."/>
            <person name="Dalin E."/>
            <person name="Tice H."/>
            <person name="Pitluck S."/>
            <person name="Saunders E."/>
            <person name="Brettin T."/>
            <person name="Bruce D."/>
            <person name="Han C."/>
            <person name="Tapia R."/>
            <person name="Schmutz J."/>
            <person name="Larimer F."/>
            <person name="Land M."/>
            <person name="Hauser L."/>
            <person name="Kyrpides N."/>
            <person name="Mikhailova N."/>
            <person name="Hoff W."/>
            <person name="Richardson P."/>
        </authorList>
    </citation>
    <scope>NUCLEOTIDE SEQUENCE [LARGE SCALE GENOMIC DNA]</scope>
    <source>
        <strain>DSM 244 / SL1</strain>
    </source>
</reference>
<feature type="chain" id="PRO_0000309929" description="Large ribosomal subunit protein uL2">
    <location>
        <begin position="1"/>
        <end position="274"/>
    </location>
</feature>
<feature type="region of interest" description="Disordered" evidence="2">
    <location>
        <begin position="36"/>
        <end position="61"/>
    </location>
</feature>
<feature type="region of interest" description="Disordered" evidence="2">
    <location>
        <begin position="223"/>
        <end position="274"/>
    </location>
</feature>
<feature type="compositionally biased region" description="Polar residues" evidence="2">
    <location>
        <begin position="37"/>
        <end position="46"/>
    </location>
</feature>
<feature type="compositionally biased region" description="Basic residues" evidence="2">
    <location>
        <begin position="50"/>
        <end position="61"/>
    </location>
</feature>
<feature type="compositionally biased region" description="Basic residues" evidence="2">
    <location>
        <begin position="254"/>
        <end position="274"/>
    </location>
</feature>
<comment type="function">
    <text evidence="1">One of the primary rRNA binding proteins. Required for association of the 30S and 50S subunits to form the 70S ribosome, for tRNA binding and peptide bond formation. It has been suggested to have peptidyltransferase activity; this is somewhat controversial. Makes several contacts with the 16S rRNA in the 70S ribosome.</text>
</comment>
<comment type="subunit">
    <text evidence="1">Part of the 50S ribosomal subunit. Forms a bridge to the 30S subunit in the 70S ribosome.</text>
</comment>
<comment type="similarity">
    <text evidence="1">Belongs to the universal ribosomal protein uL2 family.</text>
</comment>
<organism>
    <name type="scientific">Halorhodospira halophila (strain DSM 244 / SL1)</name>
    <name type="common">Ectothiorhodospira halophila (strain DSM 244 / SL1)</name>
    <dbReference type="NCBI Taxonomy" id="349124"/>
    <lineage>
        <taxon>Bacteria</taxon>
        <taxon>Pseudomonadati</taxon>
        <taxon>Pseudomonadota</taxon>
        <taxon>Gammaproteobacteria</taxon>
        <taxon>Chromatiales</taxon>
        <taxon>Ectothiorhodospiraceae</taxon>
        <taxon>Halorhodospira</taxon>
    </lineage>
</organism>
<protein>
    <recommendedName>
        <fullName evidence="1">Large ribosomal subunit protein uL2</fullName>
    </recommendedName>
    <alternativeName>
        <fullName evidence="3">50S ribosomal protein L2</fullName>
    </alternativeName>
</protein>
<accession>A1WVB9</accession>
<keyword id="KW-1185">Reference proteome</keyword>
<keyword id="KW-0687">Ribonucleoprotein</keyword>
<keyword id="KW-0689">Ribosomal protein</keyword>
<keyword id="KW-0694">RNA-binding</keyword>
<keyword id="KW-0699">rRNA-binding</keyword>
<proteinExistence type="inferred from homology"/>
<sequence length="274" mass="29851">MALVKSKPTSPGRRFVVKTKDARLHQGGPYEPLVVQKSKTGGRNSNGRITTRHRGGGHKQRYRQIDFKRNKTGVPGKVERLEYDPNRSANIALVLYQDGERRYIIAPRGVEPGSPIQSGRDAAIKPGNALPLRNIPVGTQVHCVELKPGKGAQLARSAGAGVQVVARESGMATLRLRSGEMRRVPADCMATVGEVGNAEHSLRNLGKAGAKRHLGVRPTVRGVAMNPVDHPHGGGEGRTAGGRHPVSPWGMPTKGHKTRKNKRTDKYIVRRRKR</sequence>
<name>RL2_HALHL</name>